<keyword id="KW-1003">Cell membrane</keyword>
<keyword id="KW-0472">Membrane</keyword>
<keyword id="KW-1185">Reference proteome</keyword>
<keyword id="KW-0812">Transmembrane</keyword>
<keyword id="KW-1133">Transmembrane helix</keyword>
<comment type="subcellular location">
    <subcellularLocation>
        <location evidence="3">Cell membrane</location>
        <topology evidence="1">Single-pass membrane protein</topology>
    </subcellularLocation>
</comment>
<comment type="induction">
    <text evidence="2">Transcriptionally regulated by MmpR5.</text>
</comment>
<comment type="similarity">
    <text evidence="3">Belongs to the MmpS family.</text>
</comment>
<comment type="sequence caution" evidence="3">
    <conflict type="erroneous initiation">
        <sequence resource="EMBL-CDS" id="CCP43243"/>
    </conflict>
    <text>Extended N-terminus.</text>
</comment>
<feature type="chain" id="PRO_0000216153" description="Probable transport accessory protein MmpS2">
    <location>
        <begin position="1"/>
        <end position="145"/>
    </location>
</feature>
<feature type="transmembrane region" description="Helical" evidence="1">
    <location>
        <begin position="11"/>
        <end position="31"/>
    </location>
</feature>
<reference key="1">
    <citation type="journal article" date="1998" name="Nature">
        <title>Deciphering the biology of Mycobacterium tuberculosis from the complete genome sequence.</title>
        <authorList>
            <person name="Cole S.T."/>
            <person name="Brosch R."/>
            <person name="Parkhill J."/>
            <person name="Garnier T."/>
            <person name="Churcher C.M."/>
            <person name="Harris D.E."/>
            <person name="Gordon S.V."/>
            <person name="Eiglmeier K."/>
            <person name="Gas S."/>
            <person name="Barry C.E. III"/>
            <person name="Tekaia F."/>
            <person name="Badcock K."/>
            <person name="Basham D."/>
            <person name="Brown D."/>
            <person name="Chillingworth T."/>
            <person name="Connor R."/>
            <person name="Davies R.M."/>
            <person name="Devlin K."/>
            <person name="Feltwell T."/>
            <person name="Gentles S."/>
            <person name="Hamlin N."/>
            <person name="Holroyd S."/>
            <person name="Hornsby T."/>
            <person name="Jagels K."/>
            <person name="Krogh A."/>
            <person name="McLean J."/>
            <person name="Moule S."/>
            <person name="Murphy L.D."/>
            <person name="Oliver S."/>
            <person name="Osborne J."/>
            <person name="Quail M.A."/>
            <person name="Rajandream M.A."/>
            <person name="Rogers J."/>
            <person name="Rutter S."/>
            <person name="Seeger K."/>
            <person name="Skelton S."/>
            <person name="Squares S."/>
            <person name="Squares R."/>
            <person name="Sulston J.E."/>
            <person name="Taylor K."/>
            <person name="Whitehead S."/>
            <person name="Barrell B.G."/>
        </authorList>
    </citation>
    <scope>NUCLEOTIDE SEQUENCE [LARGE SCALE GENOMIC DNA]</scope>
    <source>
        <strain>ATCC 25618 / H37Rv</strain>
    </source>
</reference>
<reference key="2">
    <citation type="journal article" date="2011" name="Mol. Cell. Proteomics">
        <title>Proteogenomic analysis of Mycobacterium tuberculosis by high resolution mass spectrometry.</title>
        <authorList>
            <person name="Kelkar D.S."/>
            <person name="Kumar D."/>
            <person name="Kumar P."/>
            <person name="Balakrishnan L."/>
            <person name="Muthusamy B."/>
            <person name="Yadav A.K."/>
            <person name="Shrivastava P."/>
            <person name="Marimuthu A."/>
            <person name="Anand S."/>
            <person name="Sundaram H."/>
            <person name="Kingsbury R."/>
            <person name="Harsha H.C."/>
            <person name="Nair B."/>
            <person name="Prasad T.S."/>
            <person name="Chauhan D.S."/>
            <person name="Katoch K."/>
            <person name="Katoch V.M."/>
            <person name="Kumar P."/>
            <person name="Chaerkady R."/>
            <person name="Ramachandran S."/>
            <person name="Dash D."/>
            <person name="Pandey A."/>
        </authorList>
    </citation>
    <scope>IDENTIFICATION BY MASS SPECTROMETRY [LARGE SCALE ANALYSIS]</scope>
    <source>
        <strain>ATCC 25618 / H37Rv</strain>
    </source>
</reference>
<reference key="3">
    <citation type="journal article" date="2014" name="J. Biol. Chem.">
        <title>Crystal structure of the transcriptional regulator Rv0678 of Mycobacterium tuberculosis.</title>
        <authorList>
            <person name="Radhakrishnan A."/>
            <person name="Kumar N."/>
            <person name="Wright C.C."/>
            <person name="Chou T.H."/>
            <person name="Tringides M.L."/>
            <person name="Bolla J.R."/>
            <person name="Lei H.T."/>
            <person name="Rajashankar K.R."/>
            <person name="Su C.C."/>
            <person name="Purdy G.E."/>
            <person name="Yu E.W."/>
        </authorList>
    </citation>
    <scope>INDUCTION</scope>
    <source>
        <strain>H37Rv</strain>
    </source>
</reference>
<gene>
    <name type="primary">mmpS2</name>
    <name type="ordered locus">Rv0506</name>
    <name type="ORF">MTCY20G9.33</name>
</gene>
<proteinExistence type="evidence at protein level"/>
<evidence type="ECO:0000255" key="1"/>
<evidence type="ECO:0000269" key="2">
    <source>
    </source>
</evidence>
<evidence type="ECO:0000305" key="3"/>
<protein>
    <recommendedName>
        <fullName evidence="3">Probable transport accessory protein MmpS2</fullName>
    </recommendedName>
</protein>
<organism>
    <name type="scientific">Mycobacterium tuberculosis (strain ATCC 25618 / H37Rv)</name>
    <dbReference type="NCBI Taxonomy" id="83332"/>
    <lineage>
        <taxon>Bacteria</taxon>
        <taxon>Bacillati</taxon>
        <taxon>Actinomycetota</taxon>
        <taxon>Actinomycetes</taxon>
        <taxon>Mycobacteriales</taxon>
        <taxon>Mycobacteriaceae</taxon>
        <taxon>Mycobacterium</taxon>
        <taxon>Mycobacterium tuberculosis complex</taxon>
    </lineage>
</organism>
<sequence>MISVSGAVKRMWLLLAIVVVAVVGGLGIYRLHSIFGVHEQPTVMVKPDFDVPLFNPKRVTYEVFGPAKTAKIAYLDPDARVHRLDSVSLPWSVTVETTLPAVSVNLMAQSNADVISCRIIVNGAVKDERSETSPRALTSCQVSSG</sequence>
<accession>P9WJT3</accession>
<accession>L0T6P6</accession>
<accession>P65376</accession>
<accession>Q11170</accession>
<dbReference type="EMBL" id="AL123456">
    <property type="protein sequence ID" value="CCP43243.1"/>
    <property type="status" value="ALT_INIT"/>
    <property type="molecule type" value="Genomic_DNA"/>
</dbReference>
<dbReference type="PIR" id="E70746">
    <property type="entry name" value="E70746"/>
</dbReference>
<dbReference type="RefSeq" id="NP_215020.1">
    <property type="nucleotide sequence ID" value="NC_000962.3"/>
</dbReference>
<dbReference type="SMR" id="P9WJT3"/>
<dbReference type="STRING" id="83332.Rv0506"/>
<dbReference type="PaxDb" id="83332-Rv0506"/>
<dbReference type="DNASU" id="887279"/>
<dbReference type="GeneID" id="887279"/>
<dbReference type="KEGG" id="mtu:Rv0506"/>
<dbReference type="PATRIC" id="fig|83332.12.peg.562"/>
<dbReference type="TubercuList" id="Rv0506"/>
<dbReference type="eggNOG" id="ENOG5030G8G">
    <property type="taxonomic scope" value="Bacteria"/>
</dbReference>
<dbReference type="InParanoid" id="P9WJT3"/>
<dbReference type="OrthoDB" id="3398257at2"/>
<dbReference type="Proteomes" id="UP000001584">
    <property type="component" value="Chromosome"/>
</dbReference>
<dbReference type="GO" id="GO:0005576">
    <property type="term" value="C:extracellular region"/>
    <property type="evidence" value="ECO:0007005"/>
    <property type="project" value="MTBBASE"/>
</dbReference>
<dbReference type="GO" id="GO:0005886">
    <property type="term" value="C:plasma membrane"/>
    <property type="evidence" value="ECO:0007669"/>
    <property type="project" value="UniProtKB-SubCell"/>
</dbReference>
<dbReference type="Gene3D" id="2.60.40.2880">
    <property type="entry name" value="MmpS1-5, C-terminal soluble domain"/>
    <property type="match status" value="1"/>
</dbReference>
<dbReference type="InterPro" id="IPR008693">
    <property type="entry name" value="MmpS"/>
</dbReference>
<dbReference type="InterPro" id="IPR038468">
    <property type="entry name" value="MmpS_C"/>
</dbReference>
<dbReference type="Pfam" id="PF05423">
    <property type="entry name" value="Mycobact_memb"/>
    <property type="match status" value="1"/>
</dbReference>
<name>MMPS2_MYCTU</name>